<reference key="1">
    <citation type="journal article" date="2006" name="Proc. Natl. Acad. Sci. U.S.A.">
        <title>The complete genome of Rhodococcus sp. RHA1 provides insights into a catabolic powerhouse.</title>
        <authorList>
            <person name="McLeod M.P."/>
            <person name="Warren R.L."/>
            <person name="Hsiao W.W.L."/>
            <person name="Araki N."/>
            <person name="Myhre M."/>
            <person name="Fernandes C."/>
            <person name="Miyazawa D."/>
            <person name="Wong W."/>
            <person name="Lillquist A.L."/>
            <person name="Wang D."/>
            <person name="Dosanjh M."/>
            <person name="Hara H."/>
            <person name="Petrescu A."/>
            <person name="Morin R.D."/>
            <person name="Yang G."/>
            <person name="Stott J.M."/>
            <person name="Schein J.E."/>
            <person name="Shin H."/>
            <person name="Smailus D."/>
            <person name="Siddiqui A.S."/>
            <person name="Marra M.A."/>
            <person name="Jones S.J.M."/>
            <person name="Holt R."/>
            <person name="Brinkman F.S.L."/>
            <person name="Miyauchi K."/>
            <person name="Fukuda M."/>
            <person name="Davies J.E."/>
            <person name="Mohn W.W."/>
            <person name="Eltis L.D."/>
        </authorList>
    </citation>
    <scope>NUCLEOTIDE SEQUENCE [LARGE SCALE GENOMIC DNA]</scope>
    <source>
        <strain>RHA1</strain>
    </source>
</reference>
<proteinExistence type="inferred from homology"/>
<feature type="chain" id="PRO_1000086049" description="Small ribosomal subunit protein uS5">
    <location>
        <begin position="1"/>
        <end position="218"/>
    </location>
</feature>
<feature type="domain" description="S5 DRBM" evidence="1">
    <location>
        <begin position="49"/>
        <end position="112"/>
    </location>
</feature>
<feature type="region of interest" description="Disordered" evidence="2">
    <location>
        <begin position="1"/>
        <end position="49"/>
    </location>
</feature>
<feature type="compositionally biased region" description="Basic and acidic residues" evidence="2">
    <location>
        <begin position="26"/>
        <end position="49"/>
    </location>
</feature>
<evidence type="ECO:0000255" key="1">
    <source>
        <dbReference type="HAMAP-Rule" id="MF_01307"/>
    </source>
</evidence>
<evidence type="ECO:0000256" key="2">
    <source>
        <dbReference type="SAM" id="MobiDB-lite"/>
    </source>
</evidence>
<evidence type="ECO:0000305" key="3"/>
<sequence>MPGRQRRDGGSGPAGQNGPNTGDNRGGGDRRGGGRDDRRGGQSAEKSNHIERVVTINRVSKVVKGGRRFSFTALVIVGDGNGLVGVGYGKAKEVPAAIQKGVEEARKSFFRVPMIGSTITHPVQGEAAAGVVMLRPASPGTGVIAGGAVRAVLECAGIHDILSKSLGSDNAINVVHATVAALKGLQRPEEVAARRGLALEDVAPAGMLRARAQAGSVK</sequence>
<gene>
    <name evidence="1" type="primary">rpsE</name>
    <name type="ordered locus">RHA1_ro06150</name>
</gene>
<name>RS5_RHOJR</name>
<keyword id="KW-0687">Ribonucleoprotein</keyword>
<keyword id="KW-0689">Ribosomal protein</keyword>
<keyword id="KW-0694">RNA-binding</keyword>
<keyword id="KW-0699">rRNA-binding</keyword>
<comment type="function">
    <text evidence="1">With S4 and S12 plays an important role in translational accuracy.</text>
</comment>
<comment type="function">
    <text evidence="1">Located at the back of the 30S subunit body where it stabilizes the conformation of the head with respect to the body.</text>
</comment>
<comment type="subunit">
    <text evidence="1">Part of the 30S ribosomal subunit. Contacts proteins S4 and S8.</text>
</comment>
<comment type="domain">
    <text>The N-terminal domain interacts with the head of the 30S subunit; the C-terminal domain interacts with the body and contacts protein S4. The interaction surface between S4 and S5 is involved in control of translational fidelity.</text>
</comment>
<comment type="similarity">
    <text evidence="1">Belongs to the universal ribosomal protein uS5 family.</text>
</comment>
<organism>
    <name type="scientific">Rhodococcus jostii (strain RHA1)</name>
    <dbReference type="NCBI Taxonomy" id="101510"/>
    <lineage>
        <taxon>Bacteria</taxon>
        <taxon>Bacillati</taxon>
        <taxon>Actinomycetota</taxon>
        <taxon>Actinomycetes</taxon>
        <taxon>Mycobacteriales</taxon>
        <taxon>Nocardiaceae</taxon>
        <taxon>Rhodococcus</taxon>
    </lineage>
</organism>
<dbReference type="EMBL" id="CP000431">
    <property type="protein sequence ID" value="ABG97927.1"/>
    <property type="molecule type" value="Genomic_DNA"/>
</dbReference>
<dbReference type="RefSeq" id="WP_005253858.1">
    <property type="nucleotide sequence ID" value="NC_008268.1"/>
</dbReference>
<dbReference type="SMR" id="Q0S3F9"/>
<dbReference type="KEGG" id="rha:RHA1_ro06150"/>
<dbReference type="eggNOG" id="COG0098">
    <property type="taxonomic scope" value="Bacteria"/>
</dbReference>
<dbReference type="HOGENOM" id="CLU_065898_2_1_11"/>
<dbReference type="OrthoDB" id="9809045at2"/>
<dbReference type="Proteomes" id="UP000008710">
    <property type="component" value="Chromosome"/>
</dbReference>
<dbReference type="GO" id="GO:0015935">
    <property type="term" value="C:small ribosomal subunit"/>
    <property type="evidence" value="ECO:0007669"/>
    <property type="project" value="InterPro"/>
</dbReference>
<dbReference type="GO" id="GO:0019843">
    <property type="term" value="F:rRNA binding"/>
    <property type="evidence" value="ECO:0007669"/>
    <property type="project" value="UniProtKB-UniRule"/>
</dbReference>
<dbReference type="GO" id="GO:0003735">
    <property type="term" value="F:structural constituent of ribosome"/>
    <property type="evidence" value="ECO:0007669"/>
    <property type="project" value="InterPro"/>
</dbReference>
<dbReference type="GO" id="GO:0006412">
    <property type="term" value="P:translation"/>
    <property type="evidence" value="ECO:0007669"/>
    <property type="project" value="UniProtKB-UniRule"/>
</dbReference>
<dbReference type="FunFam" id="3.30.160.20:FF:000001">
    <property type="entry name" value="30S ribosomal protein S5"/>
    <property type="match status" value="1"/>
</dbReference>
<dbReference type="FunFam" id="3.30.230.10:FF:000002">
    <property type="entry name" value="30S ribosomal protein S5"/>
    <property type="match status" value="1"/>
</dbReference>
<dbReference type="Gene3D" id="3.30.160.20">
    <property type="match status" value="1"/>
</dbReference>
<dbReference type="Gene3D" id="3.30.230.10">
    <property type="match status" value="1"/>
</dbReference>
<dbReference type="HAMAP" id="MF_01307_B">
    <property type="entry name" value="Ribosomal_uS5_B"/>
    <property type="match status" value="1"/>
</dbReference>
<dbReference type="InterPro" id="IPR020568">
    <property type="entry name" value="Ribosomal_Su5_D2-typ_SF"/>
</dbReference>
<dbReference type="InterPro" id="IPR000851">
    <property type="entry name" value="Ribosomal_uS5"/>
</dbReference>
<dbReference type="InterPro" id="IPR005712">
    <property type="entry name" value="Ribosomal_uS5_bac-type"/>
</dbReference>
<dbReference type="InterPro" id="IPR005324">
    <property type="entry name" value="Ribosomal_uS5_C"/>
</dbReference>
<dbReference type="InterPro" id="IPR013810">
    <property type="entry name" value="Ribosomal_uS5_N"/>
</dbReference>
<dbReference type="InterPro" id="IPR018192">
    <property type="entry name" value="Ribosomal_uS5_N_CS"/>
</dbReference>
<dbReference type="InterPro" id="IPR014721">
    <property type="entry name" value="Ribsml_uS5_D2-typ_fold_subgr"/>
</dbReference>
<dbReference type="NCBIfam" id="TIGR01021">
    <property type="entry name" value="rpsE_bact"/>
    <property type="match status" value="1"/>
</dbReference>
<dbReference type="PANTHER" id="PTHR48277">
    <property type="entry name" value="MITOCHONDRIAL RIBOSOMAL PROTEIN S5"/>
    <property type="match status" value="1"/>
</dbReference>
<dbReference type="PANTHER" id="PTHR48277:SF1">
    <property type="entry name" value="MITOCHONDRIAL RIBOSOMAL PROTEIN S5"/>
    <property type="match status" value="1"/>
</dbReference>
<dbReference type="Pfam" id="PF00333">
    <property type="entry name" value="Ribosomal_S5"/>
    <property type="match status" value="1"/>
</dbReference>
<dbReference type="Pfam" id="PF03719">
    <property type="entry name" value="Ribosomal_S5_C"/>
    <property type="match status" value="1"/>
</dbReference>
<dbReference type="SUPFAM" id="SSF54768">
    <property type="entry name" value="dsRNA-binding domain-like"/>
    <property type="match status" value="1"/>
</dbReference>
<dbReference type="SUPFAM" id="SSF54211">
    <property type="entry name" value="Ribosomal protein S5 domain 2-like"/>
    <property type="match status" value="1"/>
</dbReference>
<dbReference type="PROSITE" id="PS00585">
    <property type="entry name" value="RIBOSOMAL_S5"/>
    <property type="match status" value="1"/>
</dbReference>
<dbReference type="PROSITE" id="PS50881">
    <property type="entry name" value="S5_DSRBD"/>
    <property type="match status" value="1"/>
</dbReference>
<protein>
    <recommendedName>
        <fullName evidence="1">Small ribosomal subunit protein uS5</fullName>
    </recommendedName>
    <alternativeName>
        <fullName evidence="3">30S ribosomal protein S5</fullName>
    </alternativeName>
</protein>
<accession>Q0S3F9</accession>